<name>TPMT_SHEPW</name>
<proteinExistence type="inferred from homology"/>
<keyword id="KW-0963">Cytoplasm</keyword>
<keyword id="KW-0489">Methyltransferase</keyword>
<keyword id="KW-0949">S-adenosyl-L-methionine</keyword>
<keyword id="KW-0808">Transferase</keyword>
<comment type="catalytic activity">
    <reaction evidence="1">
        <text>S-adenosyl-L-methionine + a thiopurine = S-adenosyl-L-homocysteine + a thiopurine S-methylether.</text>
        <dbReference type="EC" id="2.1.1.67"/>
    </reaction>
</comment>
<comment type="subcellular location">
    <subcellularLocation>
        <location evidence="1">Cytoplasm</location>
    </subcellularLocation>
</comment>
<comment type="similarity">
    <text evidence="1">Belongs to the class I-like SAM-binding methyltransferase superfamily. TPMT family.</text>
</comment>
<gene>
    <name evidence="1" type="primary">tpm</name>
    <name type="ordered locus">swp_4515</name>
</gene>
<organism>
    <name type="scientific">Shewanella piezotolerans (strain WP3 / JCM 13877)</name>
    <dbReference type="NCBI Taxonomy" id="225849"/>
    <lineage>
        <taxon>Bacteria</taxon>
        <taxon>Pseudomonadati</taxon>
        <taxon>Pseudomonadota</taxon>
        <taxon>Gammaproteobacteria</taxon>
        <taxon>Alteromonadales</taxon>
        <taxon>Shewanellaceae</taxon>
        <taxon>Shewanella</taxon>
    </lineage>
</organism>
<dbReference type="EC" id="2.1.1.67" evidence="1"/>
<dbReference type="EMBL" id="CP000472">
    <property type="protein sequence ID" value="ACJ31158.1"/>
    <property type="molecule type" value="Genomic_DNA"/>
</dbReference>
<dbReference type="RefSeq" id="WP_020914488.1">
    <property type="nucleotide sequence ID" value="NC_011566.1"/>
</dbReference>
<dbReference type="SMR" id="B8CUG6"/>
<dbReference type="STRING" id="225849.swp_4515"/>
<dbReference type="KEGG" id="swp:swp_4515"/>
<dbReference type="eggNOG" id="COG0500">
    <property type="taxonomic scope" value="Bacteria"/>
</dbReference>
<dbReference type="HOGENOM" id="CLU_085515_1_0_6"/>
<dbReference type="OrthoDB" id="9778208at2"/>
<dbReference type="Proteomes" id="UP000000753">
    <property type="component" value="Chromosome"/>
</dbReference>
<dbReference type="GO" id="GO:0005737">
    <property type="term" value="C:cytoplasm"/>
    <property type="evidence" value="ECO:0007669"/>
    <property type="project" value="UniProtKB-SubCell"/>
</dbReference>
<dbReference type="GO" id="GO:0008119">
    <property type="term" value="F:thiopurine S-methyltransferase activity"/>
    <property type="evidence" value="ECO:0007669"/>
    <property type="project" value="UniProtKB-UniRule"/>
</dbReference>
<dbReference type="GO" id="GO:0032259">
    <property type="term" value="P:methylation"/>
    <property type="evidence" value="ECO:0007669"/>
    <property type="project" value="UniProtKB-KW"/>
</dbReference>
<dbReference type="GO" id="GO:0010038">
    <property type="term" value="P:response to metal ion"/>
    <property type="evidence" value="ECO:0007669"/>
    <property type="project" value="InterPro"/>
</dbReference>
<dbReference type="FunFam" id="3.40.50.150:FF:000101">
    <property type="entry name" value="Thiopurine S-methyltransferase"/>
    <property type="match status" value="1"/>
</dbReference>
<dbReference type="Gene3D" id="3.40.50.150">
    <property type="entry name" value="Vaccinia Virus protein VP39"/>
    <property type="match status" value="1"/>
</dbReference>
<dbReference type="HAMAP" id="MF_00812">
    <property type="entry name" value="Thiopur_methtran"/>
    <property type="match status" value="1"/>
</dbReference>
<dbReference type="InterPro" id="IPR029063">
    <property type="entry name" value="SAM-dependent_MTases_sf"/>
</dbReference>
<dbReference type="InterPro" id="IPR022474">
    <property type="entry name" value="Thiopur_S-MeTfrase_Se/Te_detox"/>
</dbReference>
<dbReference type="InterPro" id="IPR025835">
    <property type="entry name" value="Thiopurine_S-MeTrfase"/>
</dbReference>
<dbReference type="InterPro" id="IPR008854">
    <property type="entry name" value="TPMT"/>
</dbReference>
<dbReference type="NCBIfam" id="NF009732">
    <property type="entry name" value="PRK13255.1"/>
    <property type="match status" value="1"/>
</dbReference>
<dbReference type="NCBIfam" id="TIGR03840">
    <property type="entry name" value="TMPT_Se_Te"/>
    <property type="match status" value="1"/>
</dbReference>
<dbReference type="PANTHER" id="PTHR10259">
    <property type="entry name" value="THIOPURINE S-METHYLTRANSFERASE"/>
    <property type="match status" value="1"/>
</dbReference>
<dbReference type="PANTHER" id="PTHR10259:SF11">
    <property type="entry name" value="THIOPURINE S-METHYLTRANSFERASE"/>
    <property type="match status" value="1"/>
</dbReference>
<dbReference type="Pfam" id="PF05724">
    <property type="entry name" value="TPMT"/>
    <property type="match status" value="1"/>
</dbReference>
<dbReference type="PIRSF" id="PIRSF023956">
    <property type="entry name" value="Thiopurine_S-methyltransferase"/>
    <property type="match status" value="1"/>
</dbReference>
<dbReference type="SUPFAM" id="SSF53335">
    <property type="entry name" value="S-adenosyl-L-methionine-dependent methyltransferases"/>
    <property type="match status" value="1"/>
</dbReference>
<dbReference type="PROSITE" id="PS51585">
    <property type="entry name" value="SAM_MT_TPMT"/>
    <property type="match status" value="1"/>
</dbReference>
<protein>
    <recommendedName>
        <fullName evidence="1">Thiopurine S-methyltransferase</fullName>
        <ecNumber evidence="1">2.1.1.67</ecNumber>
    </recommendedName>
    <alternativeName>
        <fullName evidence="1">Thiopurine methyltransferase</fullName>
    </alternativeName>
</protein>
<evidence type="ECO:0000255" key="1">
    <source>
        <dbReference type="HAMAP-Rule" id="MF_00812"/>
    </source>
</evidence>
<sequence>MQPSFWHEKWDAQQIGFHLSAVNPLLIQFWSQLKLPANSQVFVPLCGKSLDMCFLAEQGHDVLACELNDLAVSQFYQENNLTHTVEKVGEHKRYSTEQITIYQGDIFSLQNTNSVELAKTSAFYDRAALIAWPEAMRLQYAQQLACLIPAGSVGLLVTLDYPQAELNGPPFSVSDDWMQANMGADFEIERLACEDVLSDNPRFVKKQVSSLTESVYKLTRKG</sequence>
<feature type="chain" id="PRO_1000134080" description="Thiopurine S-methyltransferase">
    <location>
        <begin position="1"/>
        <end position="222"/>
    </location>
</feature>
<feature type="binding site" evidence="1">
    <location>
        <position position="10"/>
    </location>
    <ligand>
        <name>S-adenosyl-L-methionine</name>
        <dbReference type="ChEBI" id="CHEBI:59789"/>
    </ligand>
</feature>
<feature type="binding site" evidence="1">
    <location>
        <position position="45"/>
    </location>
    <ligand>
        <name>S-adenosyl-L-methionine</name>
        <dbReference type="ChEBI" id="CHEBI:59789"/>
    </ligand>
</feature>
<feature type="binding site" evidence="1">
    <location>
        <position position="66"/>
    </location>
    <ligand>
        <name>S-adenosyl-L-methionine</name>
        <dbReference type="ChEBI" id="CHEBI:59789"/>
    </ligand>
</feature>
<feature type="binding site" evidence="1">
    <location>
        <position position="126"/>
    </location>
    <ligand>
        <name>S-adenosyl-L-methionine</name>
        <dbReference type="ChEBI" id="CHEBI:59789"/>
    </ligand>
</feature>
<accession>B8CUG6</accession>
<reference key="1">
    <citation type="journal article" date="2008" name="PLoS ONE">
        <title>Environmental adaptation: genomic analysis of the piezotolerant and psychrotolerant deep-sea iron reducing bacterium Shewanella piezotolerans WP3.</title>
        <authorList>
            <person name="Wang F."/>
            <person name="Wang J."/>
            <person name="Jian H."/>
            <person name="Zhang B."/>
            <person name="Li S."/>
            <person name="Wang F."/>
            <person name="Zeng X."/>
            <person name="Gao L."/>
            <person name="Bartlett D.H."/>
            <person name="Yu J."/>
            <person name="Hu S."/>
            <person name="Xiao X."/>
        </authorList>
    </citation>
    <scope>NUCLEOTIDE SEQUENCE [LARGE SCALE GENOMIC DNA]</scope>
    <source>
        <strain>WP3 / JCM 13877</strain>
    </source>
</reference>